<evidence type="ECO:0000250" key="1">
    <source>
        <dbReference type="UniProtKB" id="P07617"/>
    </source>
</evidence>
<evidence type="ECO:0000255" key="2">
    <source>
        <dbReference type="PROSITE-ProRule" id="PRU00944"/>
    </source>
</evidence>
<evidence type="ECO:0000256" key="3">
    <source>
        <dbReference type="SAM" id="MobiDB-lite"/>
    </source>
</evidence>
<evidence type="ECO:0007829" key="4">
    <source>
        <dbReference type="PDB" id="8B07"/>
    </source>
</evidence>
<comment type="function">
    <text evidence="1">Displays methyltransferase, positive regulation of the poly(A) polymerase and transcription elongation activities. Involved in the modification of both mRNA ends and in intermediate and late gene positive transcription elongation. At the mRNAs 5' end, methylates the ribose 2' OH group of the first transcribed nucleotide, thereby producing a 2'-O-methylpurine cap. At the 3' end, functions as a processivity factor which stimulates the activity of the viral poly(A) polymerase OPG063 that creates mRNA's poly(A) tail. In the presence of OPG102, OPG063 does not dissociate from the RNA allowing tail elongation to around 250 adenylates.</text>
</comment>
<comment type="catalytic activity">
    <reaction evidence="1">
        <text>a 5'-end (N(7)-methyl 5'-triphosphoguanosine)-ribonucleoside in mRNA + S-adenosyl-L-methionine = a 5'-end (N(7)-methyl 5'-triphosphoguanosine)-(2'-O-methyl-ribonucleoside) in mRNA + S-adenosyl-L-homocysteine + H(+)</text>
        <dbReference type="Rhea" id="RHEA:67020"/>
        <dbReference type="Rhea" id="RHEA-COMP:17167"/>
        <dbReference type="Rhea" id="RHEA-COMP:17168"/>
        <dbReference type="ChEBI" id="CHEBI:15378"/>
        <dbReference type="ChEBI" id="CHEBI:57856"/>
        <dbReference type="ChEBI" id="CHEBI:59789"/>
        <dbReference type="ChEBI" id="CHEBI:156461"/>
        <dbReference type="ChEBI" id="CHEBI:167609"/>
        <dbReference type="EC" id="2.1.1.57"/>
    </reaction>
</comment>
<comment type="subunit">
    <text evidence="1">Interacts with poly(A) polymerase catalytic subunit OPG063. Interacts with OPG109 and OPG123; these interactions might help linking transcription to capping and polyadenylation.</text>
</comment>
<comment type="subcellular location">
    <subcellularLocation>
        <location evidence="1">Virion</location>
    </subcellularLocation>
    <text evidence="1">Localizes to the virion core.</text>
</comment>
<comment type="similarity">
    <text evidence="2">Belongs to the class I-like SAM-binding methyltransferase superfamily. Poxvirus/kinetoplastid 2'-O-MTase family.</text>
</comment>
<accession>A0A7H0DN74</accession>
<sequence>MDVVSLDKPFMYFEEIDNELDYEPESANEVAKKLPYQGQLKLLLGELFFLSKLQRHGILDGATVVYIGSAPGTHIRYLRDHFYNLGVIIKWMLIDGRHHDPILNGLRDVTLVTRFVDEEYLRSIKKQLHPSKIILISDVRSKRGGNEPSTADLLSNYALQNVMISILNPVASSLKWRCPFPDQWIKDFYIPHGNKMLQPFAPSYSAEMRLLSIYTGENMRLTRVTKSDAVNYEKKMYYLNKIVRNKVVINFDYPNQEYDYFHMYFMLRTVYCNKTFPTTKAKILFLQQSIFRFLNIPTTSTEKVSHEPIQRKISSKDSMSKNRNSKRSVRGNK</sequence>
<proteinExistence type="evidence at protein level"/>
<gene>
    <name type="primary">OPG102</name>
    <name type="synonym">PAPS</name>
    <name type="ORF">MPXV085</name>
</gene>
<keyword id="KW-0002">3D-structure</keyword>
<keyword id="KW-0251">Elongation factor</keyword>
<keyword id="KW-0489">Methyltransferase</keyword>
<keyword id="KW-0506">mRNA capping</keyword>
<keyword id="KW-0507">mRNA processing</keyword>
<keyword id="KW-0648">Protein biosynthesis</keyword>
<keyword id="KW-1185">Reference proteome</keyword>
<keyword id="KW-0949">S-adenosyl-L-methionine</keyword>
<keyword id="KW-0808">Transferase</keyword>
<keyword id="KW-0946">Virion</keyword>
<reference key="1">
    <citation type="journal article" date="2022" name="J. Infect. Dis.">
        <title>Exportation of Monkeypox virus from the African continent.</title>
        <authorList>
            <person name="Mauldin M.R."/>
            <person name="McCollum A.M."/>
            <person name="Nakazawa Y.J."/>
            <person name="Mandra A."/>
            <person name="Whitehouse E.R."/>
            <person name="Davidson W."/>
            <person name="Zhao H."/>
            <person name="Gao J."/>
            <person name="Li Y."/>
            <person name="Doty J."/>
            <person name="Yinka-Ogunleye A."/>
            <person name="Akinpelu A."/>
            <person name="Aruna O."/>
            <person name="Naidoo D."/>
            <person name="Lewandowski K."/>
            <person name="Afrough B."/>
            <person name="Graham V."/>
            <person name="Aarons E."/>
            <person name="Hewson R."/>
            <person name="Vipond R."/>
            <person name="Dunning J."/>
            <person name="Chand M."/>
            <person name="Brown C."/>
            <person name="Cohen-Gihon I."/>
            <person name="Erez N."/>
            <person name="Shifman O."/>
            <person name="Israeli O."/>
            <person name="Sharon M."/>
            <person name="Schwartz E."/>
            <person name="Beth-Din A."/>
            <person name="Zvi A."/>
            <person name="Mak T.M."/>
            <person name="Ng Y.K."/>
            <person name="Cui L."/>
            <person name="Lin R.T.P."/>
            <person name="Olson V.A."/>
            <person name="Brooks T."/>
            <person name="Paran N."/>
            <person name="Ihekweazu C."/>
            <person name="Reynolds M.G."/>
        </authorList>
    </citation>
    <scope>NUCLEOTIDE SEQUENCE [LARGE SCALE GENOMIC DNA]</scope>
    <source>
        <strain>MPXV-M5312_HM12_Rivers</strain>
    </source>
</reference>
<feature type="chain" id="PRO_0000457388" description="Cap-specific mRNA (nucleoside-2'-O-)-methyltransferase">
    <location>
        <begin position="1"/>
        <end position="333"/>
    </location>
</feature>
<feature type="region of interest" description="Binding to NPH-I" evidence="2">
    <location>
        <begin position="169"/>
        <end position="249"/>
    </location>
</feature>
<feature type="region of interest" description="Disordered" evidence="3">
    <location>
        <begin position="305"/>
        <end position="333"/>
    </location>
</feature>
<feature type="compositionally biased region" description="Basic and acidic residues" evidence="3">
    <location>
        <begin position="305"/>
        <end position="320"/>
    </location>
</feature>
<feature type="compositionally biased region" description="Basic residues" evidence="3">
    <location>
        <begin position="323"/>
        <end position="333"/>
    </location>
</feature>
<feature type="active site" description="For methyltransferase activity" evidence="2">
    <location>
        <position position="175"/>
    </location>
</feature>
<feature type="binding site" evidence="2">
    <location>
        <position position="22"/>
    </location>
    <ligand>
        <name>mRNA</name>
        <dbReference type="ChEBI" id="CHEBI:33699"/>
    </ligand>
</feature>
<feature type="binding site" evidence="2">
    <location>
        <position position="39"/>
    </location>
    <ligand>
        <name>S-adenosyl-L-methionine</name>
        <dbReference type="ChEBI" id="CHEBI:59789"/>
    </ligand>
</feature>
<feature type="binding site" evidence="2">
    <location>
        <position position="66"/>
    </location>
    <ligand>
        <name>S-adenosyl-L-methionine</name>
        <dbReference type="ChEBI" id="CHEBI:59789"/>
    </ligand>
</feature>
<feature type="binding site" evidence="2">
    <location>
        <position position="68"/>
    </location>
    <ligand>
        <name>S-adenosyl-L-methionine</name>
        <dbReference type="ChEBI" id="CHEBI:59789"/>
    </ligand>
</feature>
<feature type="binding site" evidence="2">
    <location>
        <position position="72"/>
    </location>
    <ligand>
        <name>S-adenosyl-L-methionine</name>
        <dbReference type="ChEBI" id="CHEBI:59789"/>
    </ligand>
</feature>
<feature type="binding site" evidence="2">
    <location>
        <position position="95"/>
    </location>
    <ligand>
        <name>S-adenosyl-L-methionine</name>
        <dbReference type="ChEBI" id="CHEBI:59789"/>
    </ligand>
</feature>
<feature type="binding site" evidence="2">
    <location>
        <position position="97"/>
    </location>
    <ligand>
        <name>S-adenosyl-L-methionine</name>
        <dbReference type="ChEBI" id="CHEBI:59789"/>
    </ligand>
</feature>
<feature type="binding site" evidence="2">
    <location>
        <position position="116"/>
    </location>
    <ligand>
        <name>S-adenosyl-L-methionine</name>
        <dbReference type="ChEBI" id="CHEBI:59789"/>
    </ligand>
</feature>
<feature type="binding site" evidence="2">
    <location>
        <position position="138"/>
    </location>
    <ligand>
        <name>S-adenosyl-L-methionine</name>
        <dbReference type="ChEBI" id="CHEBI:59789"/>
    </ligand>
</feature>
<feature type="binding site" evidence="2">
    <location>
        <begin position="177"/>
        <end position="180"/>
    </location>
    <ligand>
        <name>mRNA</name>
        <dbReference type="ChEBI" id="CHEBI:33699"/>
    </ligand>
</feature>
<feature type="binding site" evidence="2">
    <location>
        <position position="182"/>
    </location>
    <ligand>
        <name>mRNA</name>
        <dbReference type="ChEBI" id="CHEBI:33699"/>
    </ligand>
</feature>
<feature type="binding site" evidence="2">
    <location>
        <begin position="205"/>
        <end position="207"/>
    </location>
    <ligand>
        <name>mRNA</name>
        <dbReference type="ChEBI" id="CHEBI:33699"/>
    </ligand>
</feature>
<feature type="binding site" evidence="2">
    <location>
        <position position="233"/>
    </location>
    <ligand>
        <name>mRNA</name>
        <dbReference type="ChEBI" id="CHEBI:33699"/>
    </ligand>
</feature>
<feature type="strand" evidence="4">
    <location>
        <begin position="2"/>
        <end position="4"/>
    </location>
</feature>
<feature type="helix" evidence="4">
    <location>
        <begin position="13"/>
        <end position="15"/>
    </location>
</feature>
<feature type="helix" evidence="4">
    <location>
        <begin position="37"/>
        <end position="55"/>
    </location>
</feature>
<feature type="strand" evidence="4">
    <location>
        <begin position="63"/>
        <end position="68"/>
    </location>
</feature>
<feature type="helix" evidence="4">
    <location>
        <begin position="75"/>
        <end position="84"/>
    </location>
</feature>
<feature type="strand" evidence="4">
    <location>
        <begin position="90"/>
        <end position="97"/>
    </location>
</feature>
<feature type="helix" evidence="4">
    <location>
        <begin position="101"/>
        <end position="103"/>
    </location>
</feature>
<feature type="strand" evidence="4">
    <location>
        <begin position="109"/>
        <end position="113"/>
    </location>
</feature>
<feature type="helix" evidence="4">
    <location>
        <begin position="118"/>
        <end position="128"/>
    </location>
</feature>
<feature type="strand" evidence="4">
    <location>
        <begin position="133"/>
        <end position="137"/>
    </location>
</feature>
<feature type="helix" evidence="4">
    <location>
        <begin position="150"/>
        <end position="167"/>
    </location>
</feature>
<feature type="strand" evidence="4">
    <location>
        <begin position="170"/>
        <end position="176"/>
    </location>
</feature>
<feature type="helix" evidence="4">
    <location>
        <begin position="181"/>
        <end position="183"/>
    </location>
</feature>
<feature type="strand" evidence="4">
    <location>
        <begin position="188"/>
        <end position="191"/>
    </location>
</feature>
<feature type="strand" evidence="4">
    <location>
        <begin position="194"/>
        <end position="196"/>
    </location>
</feature>
<feature type="strand" evidence="4">
    <location>
        <begin position="208"/>
        <end position="213"/>
    </location>
</feature>
<feature type="strand" evidence="4">
    <location>
        <begin position="221"/>
        <end position="224"/>
    </location>
</feature>
<feature type="helix" evidence="4">
    <location>
        <begin position="226"/>
        <end position="241"/>
    </location>
</feature>
<feature type="helix" evidence="4">
    <location>
        <begin position="243"/>
        <end position="245"/>
    </location>
</feature>
<feature type="strand" evidence="4">
    <location>
        <begin position="246"/>
        <end position="248"/>
    </location>
</feature>
<feature type="helix" evidence="4">
    <location>
        <begin position="258"/>
        <end position="267"/>
    </location>
</feature>
<feature type="helix" evidence="4">
    <location>
        <begin position="279"/>
        <end position="293"/>
    </location>
</feature>
<dbReference type="EC" id="2.1.1.57"/>
<dbReference type="EMBL" id="MT903340">
    <property type="protein sequence ID" value="QNP12957.1"/>
    <property type="molecule type" value="Genomic_DNA"/>
</dbReference>
<dbReference type="RefSeq" id="YP_010377084.1">
    <property type="nucleotide sequence ID" value="NC_063383.1"/>
</dbReference>
<dbReference type="PDB" id="8B07">
    <property type="method" value="X-ray"/>
    <property type="resolution" value="2.05 A"/>
    <property type="chains" value="A/B=1-307"/>
</dbReference>
<dbReference type="PDB" id="8CEQ">
    <property type="method" value="X-ray"/>
    <property type="resolution" value="2.50 A"/>
    <property type="chains" value="A/B=1-307"/>
</dbReference>
<dbReference type="PDB" id="8CER">
    <property type="method" value="X-ray"/>
    <property type="resolution" value="2.60 A"/>
    <property type="chains" value="A/B=1-307"/>
</dbReference>
<dbReference type="PDB" id="8CES">
    <property type="method" value="X-ray"/>
    <property type="resolution" value="2.50 A"/>
    <property type="chains" value="A/B=1-307"/>
</dbReference>
<dbReference type="PDB" id="8CET">
    <property type="method" value="X-ray"/>
    <property type="resolution" value="2.50 A"/>
    <property type="chains" value="A/B=1-307"/>
</dbReference>
<dbReference type="PDB" id="8CEV">
    <property type="method" value="X-ray"/>
    <property type="resolution" value="2.14 A"/>
    <property type="chains" value="A/B=1-307"/>
</dbReference>
<dbReference type="PDB" id="8CGB">
    <property type="method" value="X-ray"/>
    <property type="resolution" value="2.47 A"/>
    <property type="chains" value="A/B=1-307"/>
</dbReference>
<dbReference type="PDB" id="8OIV">
    <property type="method" value="X-ray"/>
    <property type="resolution" value="2.12 A"/>
    <property type="chains" value="A/B=1-307"/>
</dbReference>
<dbReference type="PDBsum" id="8B07"/>
<dbReference type="PDBsum" id="8CEQ"/>
<dbReference type="PDBsum" id="8CER"/>
<dbReference type="PDBsum" id="8CES"/>
<dbReference type="PDBsum" id="8CET"/>
<dbReference type="PDBsum" id="8CEV"/>
<dbReference type="PDBsum" id="8CGB"/>
<dbReference type="PDBsum" id="8OIV"/>
<dbReference type="SMR" id="A0A7H0DN74"/>
<dbReference type="GeneID" id="72551497"/>
<dbReference type="Proteomes" id="UP000516359">
    <property type="component" value="Genome"/>
</dbReference>
<dbReference type="GO" id="GO:0044423">
    <property type="term" value="C:virion component"/>
    <property type="evidence" value="ECO:0007669"/>
    <property type="project" value="UniProtKB-KW"/>
</dbReference>
<dbReference type="GO" id="GO:0004483">
    <property type="term" value="F:mRNA (nucleoside-2'-O-)-methyltransferase activity"/>
    <property type="evidence" value="ECO:0007669"/>
    <property type="project" value="InterPro"/>
</dbReference>
<dbReference type="GO" id="GO:0006370">
    <property type="term" value="P:7-methylguanosine mRNA capping"/>
    <property type="evidence" value="ECO:0007669"/>
    <property type="project" value="UniProtKB-KW"/>
</dbReference>
<dbReference type="GO" id="GO:0032259">
    <property type="term" value="P:methylation"/>
    <property type="evidence" value="ECO:0007669"/>
    <property type="project" value="UniProtKB-KW"/>
</dbReference>
<dbReference type="GO" id="GO:0031440">
    <property type="term" value="P:regulation of mRNA 3'-end processing"/>
    <property type="evidence" value="ECO:0007669"/>
    <property type="project" value="InterPro"/>
</dbReference>
<dbReference type="CDD" id="cd20756">
    <property type="entry name" value="capping_2-OMTase_Poxviridae"/>
    <property type="match status" value="1"/>
</dbReference>
<dbReference type="Gene3D" id="3.40.50.150">
    <property type="entry name" value="Vaccinia Virus protein VP39"/>
    <property type="match status" value="1"/>
</dbReference>
<dbReference type="InterPro" id="IPR000176">
    <property type="entry name" value="mRNA_MeTrfase-like"/>
</dbReference>
<dbReference type="InterPro" id="IPR025804">
    <property type="entry name" value="Pox/kineto_cap_MeTfrase"/>
</dbReference>
<dbReference type="InterPro" id="IPR030375">
    <property type="entry name" value="Poxvir_cap_MeTfrase"/>
</dbReference>
<dbReference type="InterPro" id="IPR029063">
    <property type="entry name" value="SAM-dependent_MTases_sf"/>
</dbReference>
<dbReference type="Pfam" id="PF01358">
    <property type="entry name" value="PARP_regulatory"/>
    <property type="match status" value="1"/>
</dbReference>
<dbReference type="PIRSF" id="PIRSF003726">
    <property type="entry name" value="PolA_polym_reg_poxV"/>
    <property type="match status" value="1"/>
</dbReference>
<dbReference type="SUPFAM" id="SSF53335">
    <property type="entry name" value="S-adenosyl-L-methionine-dependent methyltransferases"/>
    <property type="match status" value="1"/>
</dbReference>
<dbReference type="PROSITE" id="PS51612">
    <property type="entry name" value="SAM_MT_2O_PK"/>
    <property type="match status" value="1"/>
</dbReference>
<name>MCE_MONPV</name>
<organismHost>
    <name type="scientific">Cynomys gunnisoni</name>
    <name type="common">Gunnison's prairie dog</name>
    <name type="synonym">Spermophilus gunnisoni</name>
    <dbReference type="NCBI Taxonomy" id="45479"/>
</organismHost>
<organismHost>
    <name type="scientific">Cynomys leucurus</name>
    <name type="common">White-tailed prairie dog</name>
    <dbReference type="NCBI Taxonomy" id="99825"/>
</organismHost>
<organismHost>
    <name type="scientific">Cynomys ludovicianus</name>
    <name type="common">Black-tailed prairie dog</name>
    <dbReference type="NCBI Taxonomy" id="45480"/>
</organismHost>
<organismHost>
    <name type="scientific">Cynomys mexicanus</name>
    <name type="common">Mexican prairie dog</name>
    <dbReference type="NCBI Taxonomy" id="99826"/>
</organismHost>
<organismHost>
    <name type="scientific">Cynomys parvidens</name>
    <name type="common">Utah prairie dog</name>
    <dbReference type="NCBI Taxonomy" id="99827"/>
</organismHost>
<organismHost>
    <name type="scientific">Gliridae</name>
    <name type="common">dormice</name>
    <dbReference type="NCBI Taxonomy" id="30650"/>
</organismHost>
<organismHost>
    <name type="scientific">Heliosciurus ruwenzorii</name>
    <name type="common">Ruwenzori sun squirrel</name>
    <dbReference type="NCBI Taxonomy" id="226685"/>
</organismHost>
<organismHost>
    <name type="scientific">Homo sapiens</name>
    <name type="common">Human</name>
    <dbReference type="NCBI Taxonomy" id="9606"/>
</organismHost>
<organismHost>
    <name type="scientific">Mus musculus</name>
    <name type="common">Mouse</name>
    <dbReference type="NCBI Taxonomy" id="10090"/>
</organismHost>
<organism>
    <name type="scientific">Monkeypox virus</name>
    <dbReference type="NCBI Taxonomy" id="10244"/>
    <lineage>
        <taxon>Viruses</taxon>
        <taxon>Varidnaviria</taxon>
        <taxon>Bamfordvirae</taxon>
        <taxon>Nucleocytoviricota</taxon>
        <taxon>Pokkesviricetes</taxon>
        <taxon>Chitovirales</taxon>
        <taxon>Poxviridae</taxon>
        <taxon>Chordopoxvirinae</taxon>
        <taxon>Orthopoxvirus</taxon>
    </lineage>
</organism>
<protein>
    <recommendedName>
        <fullName>Cap-specific mRNA (nucleoside-2'-O-)-methyltransferase</fullName>
        <ecNumber>2.1.1.57</ecNumber>
    </recommendedName>
</protein>